<keyword id="KW-0028">Amino-acid biosynthesis</keyword>
<keyword id="KW-0057">Aromatic amino acid biosynthesis</keyword>
<keyword id="KW-0150">Chloroplast</keyword>
<keyword id="KW-0315">Glutamine amidotransferase</keyword>
<keyword id="KW-0456">Lyase</keyword>
<keyword id="KW-0934">Plastid</keyword>
<keyword id="KW-0822">Tryptophan biosynthesis</keyword>
<accession>O19914</accession>
<name>TRPG_CYACA</name>
<comment type="catalytic activity">
    <reaction>
        <text>chorismate + L-glutamine = anthranilate + pyruvate + L-glutamate + H(+)</text>
        <dbReference type="Rhea" id="RHEA:21732"/>
        <dbReference type="ChEBI" id="CHEBI:15361"/>
        <dbReference type="ChEBI" id="CHEBI:15378"/>
        <dbReference type="ChEBI" id="CHEBI:16567"/>
        <dbReference type="ChEBI" id="CHEBI:29748"/>
        <dbReference type="ChEBI" id="CHEBI:29985"/>
        <dbReference type="ChEBI" id="CHEBI:58359"/>
        <dbReference type="EC" id="4.1.3.27"/>
    </reaction>
</comment>
<comment type="pathway">
    <text>Amino-acid biosynthesis; L-tryptophan biosynthesis; L-tryptophan from chorismate: step 1/5.</text>
</comment>
<comment type="subunit">
    <text>Tetramer of two components I and two components II.</text>
</comment>
<comment type="subcellular location">
    <subcellularLocation>
        <location>Plastid</location>
        <location>Chloroplast</location>
    </subcellularLocation>
</comment>
<comment type="miscellaneous">
    <text>Component I catalyzes the formation of anthranilate using ammonia rather than glutamine, whereas component II provides glutamine amidotransferase activity.</text>
</comment>
<organism>
    <name type="scientific">Cyanidium caldarium</name>
    <name type="common">Red alga</name>
    <dbReference type="NCBI Taxonomy" id="2771"/>
    <lineage>
        <taxon>Eukaryota</taxon>
        <taxon>Rhodophyta</taxon>
        <taxon>Bangiophyceae</taxon>
        <taxon>Cyanidiales</taxon>
        <taxon>Cyanidiaceae</taxon>
        <taxon>Cyanidium</taxon>
    </lineage>
</organism>
<feature type="chain" id="PRO_0000056893" description="Anthranilate synthase component 2">
    <location>
        <begin position="1"/>
        <end position="195"/>
    </location>
</feature>
<feature type="domain" description="Glutamine amidotransferase type-1" evidence="2">
    <location>
        <begin position="1"/>
        <end position="195"/>
    </location>
</feature>
<feature type="active site" description="Nucleophile; for GATase activity" evidence="2">
    <location>
        <position position="79"/>
    </location>
</feature>
<feature type="active site" evidence="2">
    <location>
        <position position="173"/>
    </location>
</feature>
<feature type="active site" evidence="2">
    <location>
        <position position="175"/>
    </location>
</feature>
<feature type="binding site" evidence="1">
    <location>
        <begin position="52"/>
        <end position="54"/>
    </location>
    <ligand>
        <name>L-glutamine</name>
        <dbReference type="ChEBI" id="CHEBI:58359"/>
    </ligand>
</feature>
<feature type="binding site" evidence="1">
    <location>
        <position position="83"/>
    </location>
    <ligand>
        <name>L-glutamine</name>
        <dbReference type="ChEBI" id="CHEBI:58359"/>
    </ligand>
</feature>
<feature type="binding site" evidence="1">
    <location>
        <begin position="129"/>
        <end position="130"/>
    </location>
    <ligand>
        <name>L-glutamine</name>
        <dbReference type="ChEBI" id="CHEBI:58359"/>
    </ligand>
</feature>
<protein>
    <recommendedName>
        <fullName>Anthranilate synthase component 2</fullName>
        <shortName>AS</shortName>
        <ecNumber>4.1.3.27</ecNumber>
    </recommendedName>
    <alternativeName>
        <fullName>Anthranilate synthase, glutamine amidotransferase component</fullName>
    </alternativeName>
</protein>
<evidence type="ECO:0000250" key="1">
    <source>
        <dbReference type="UniProtKB" id="P00900"/>
    </source>
</evidence>
<evidence type="ECO:0000255" key="2">
    <source>
        <dbReference type="PROSITE-ProRule" id="PRU00605"/>
    </source>
</evidence>
<gene>
    <name type="primary">trpG</name>
</gene>
<proteinExistence type="predicted"/>
<geneLocation type="chloroplast"/>
<reference key="1">
    <citation type="journal article" date="2000" name="J. Mol. Evol.">
        <title>The structure and gene repertoire of an ancient red algal plastid genome.</title>
        <authorList>
            <person name="Gloeckner G."/>
            <person name="Rosenthal A."/>
            <person name="Valentin K.-U."/>
        </authorList>
    </citation>
    <scope>NUCLEOTIDE SEQUENCE [LARGE SCALE GENOMIC DNA]</scope>
    <source>
        <strain>RK-1</strain>
    </source>
</reference>
<sequence>MILIIDNYDSFSYNLVQSVGEINSDLIVLRSDEIDVSKLQNLNIKHIIISPGPGHPDEYTICKQVVKFFAPYTPILGICLGHQIIATCYNASIKKSSPVFHGRASKIYCLKDKLFLGIHAPFTAARYHSLVVDQDKRGLDLTTCLKTIAITREGVIMACKHRYYHFTYGIQFHPESMLTIQGTKLLKNFLSLSYG</sequence>
<dbReference type="EC" id="4.1.3.27"/>
<dbReference type="EMBL" id="AF022186">
    <property type="protein sequence ID" value="AAB82675.1"/>
    <property type="molecule type" value="Genomic_DNA"/>
</dbReference>
<dbReference type="PIR" id="T11982">
    <property type="entry name" value="T11982"/>
</dbReference>
<dbReference type="RefSeq" id="NP_045086.1">
    <property type="nucleotide sequence ID" value="NC_001840.1"/>
</dbReference>
<dbReference type="SMR" id="O19914"/>
<dbReference type="MEROPS" id="C26.955"/>
<dbReference type="GeneID" id="800224"/>
<dbReference type="UniPathway" id="UPA00035">
    <property type="reaction ID" value="UER00040"/>
</dbReference>
<dbReference type="GO" id="GO:0009507">
    <property type="term" value="C:chloroplast"/>
    <property type="evidence" value="ECO:0007669"/>
    <property type="project" value="UniProtKB-SubCell"/>
</dbReference>
<dbReference type="GO" id="GO:0005829">
    <property type="term" value="C:cytosol"/>
    <property type="evidence" value="ECO:0007669"/>
    <property type="project" value="TreeGrafter"/>
</dbReference>
<dbReference type="GO" id="GO:0004049">
    <property type="term" value="F:anthranilate synthase activity"/>
    <property type="evidence" value="ECO:0007669"/>
    <property type="project" value="UniProtKB-EC"/>
</dbReference>
<dbReference type="GO" id="GO:0000162">
    <property type="term" value="P:L-tryptophan biosynthetic process"/>
    <property type="evidence" value="ECO:0007669"/>
    <property type="project" value="UniProtKB-UniPathway"/>
</dbReference>
<dbReference type="CDD" id="cd01743">
    <property type="entry name" value="GATase1_Anthranilate_Synthase"/>
    <property type="match status" value="1"/>
</dbReference>
<dbReference type="FunFam" id="3.40.50.880:FF:000003">
    <property type="entry name" value="Anthranilate synthase component II"/>
    <property type="match status" value="1"/>
</dbReference>
<dbReference type="Gene3D" id="3.40.50.880">
    <property type="match status" value="1"/>
</dbReference>
<dbReference type="InterPro" id="IPR050472">
    <property type="entry name" value="Anth_synth/Amidotransfase"/>
</dbReference>
<dbReference type="InterPro" id="IPR029062">
    <property type="entry name" value="Class_I_gatase-like"/>
</dbReference>
<dbReference type="InterPro" id="IPR017926">
    <property type="entry name" value="GATASE"/>
</dbReference>
<dbReference type="InterPro" id="IPR006221">
    <property type="entry name" value="TrpG/PapA_dom"/>
</dbReference>
<dbReference type="NCBIfam" id="TIGR00566">
    <property type="entry name" value="trpG_papA"/>
    <property type="match status" value="1"/>
</dbReference>
<dbReference type="PANTHER" id="PTHR43418:SF4">
    <property type="entry name" value="MULTIFUNCTIONAL TRYPTOPHAN BIOSYNTHESIS PROTEIN"/>
    <property type="match status" value="1"/>
</dbReference>
<dbReference type="PANTHER" id="PTHR43418">
    <property type="entry name" value="MULTIFUNCTIONAL TRYPTOPHAN BIOSYNTHESIS PROTEIN-RELATED"/>
    <property type="match status" value="1"/>
</dbReference>
<dbReference type="Pfam" id="PF00117">
    <property type="entry name" value="GATase"/>
    <property type="match status" value="1"/>
</dbReference>
<dbReference type="PRINTS" id="PR00097">
    <property type="entry name" value="ANTSNTHASEII"/>
</dbReference>
<dbReference type="PRINTS" id="PR00099">
    <property type="entry name" value="CPSGATASE"/>
</dbReference>
<dbReference type="PRINTS" id="PR00096">
    <property type="entry name" value="GATASE"/>
</dbReference>
<dbReference type="SUPFAM" id="SSF52317">
    <property type="entry name" value="Class I glutamine amidotransferase-like"/>
    <property type="match status" value="1"/>
</dbReference>
<dbReference type="PROSITE" id="PS51273">
    <property type="entry name" value="GATASE_TYPE_1"/>
    <property type="match status" value="1"/>
</dbReference>